<keyword id="KW-0004">4Fe-4S</keyword>
<keyword id="KW-0903">Direct protein sequencing</keyword>
<keyword id="KW-0408">Iron</keyword>
<keyword id="KW-0411">Iron-sulfur</keyword>
<keyword id="KW-0479">Metal-binding</keyword>
<keyword id="KW-0520">NAD</keyword>
<keyword id="KW-0560">Oxidoreductase</keyword>
<keyword id="KW-1185">Reference proteome</keyword>
<keyword id="KW-0677">Repeat</keyword>
<accession>P25889</accession>
<accession>P76441</accession>
<accession>Q2MAT2</accession>
<gene>
    <name type="primary">preA</name>
    <name type="synonym">yeiA</name>
    <name type="ordered locus">b2147</name>
    <name type="ordered locus">JW2134</name>
</gene>
<reference key="1">
    <citation type="journal article" date="1997" name="Science">
        <title>The complete genome sequence of Escherichia coli K-12.</title>
        <authorList>
            <person name="Blattner F.R."/>
            <person name="Plunkett G. III"/>
            <person name="Bloch C.A."/>
            <person name="Perna N.T."/>
            <person name="Burland V."/>
            <person name="Riley M."/>
            <person name="Collado-Vides J."/>
            <person name="Glasner J.D."/>
            <person name="Rode C.K."/>
            <person name="Mayhew G.F."/>
            <person name="Gregor J."/>
            <person name="Davis N.W."/>
            <person name="Kirkpatrick H.A."/>
            <person name="Goeden M.A."/>
            <person name="Rose D.J."/>
            <person name="Mau B."/>
            <person name="Shao Y."/>
        </authorList>
    </citation>
    <scope>NUCLEOTIDE SEQUENCE [LARGE SCALE GENOMIC DNA]</scope>
    <source>
        <strain>K12 / MG1655 / ATCC 47076</strain>
    </source>
</reference>
<reference key="2">
    <citation type="journal article" date="2006" name="Mol. Syst. Biol.">
        <title>Highly accurate genome sequences of Escherichia coli K-12 strains MG1655 and W3110.</title>
        <authorList>
            <person name="Hayashi K."/>
            <person name="Morooka N."/>
            <person name="Yamamoto Y."/>
            <person name="Fujita K."/>
            <person name="Isono K."/>
            <person name="Choi S."/>
            <person name="Ohtsubo E."/>
            <person name="Baba T."/>
            <person name="Wanner B.L."/>
            <person name="Mori H."/>
            <person name="Horiuchi T."/>
        </authorList>
    </citation>
    <scope>NUCLEOTIDE SEQUENCE [LARGE SCALE GENOMIC DNA]</scope>
    <source>
        <strain>K12 / W3110 / ATCC 27325 / DSM 5911</strain>
    </source>
</reference>
<reference key="3">
    <citation type="journal article" date="1991" name="Mol. Gen. Genet.">
        <title>Nucleotide sequence and analysis of the mgl operon of Escherichia coli K12.</title>
        <authorList>
            <person name="Hogg R.W."/>
            <person name="Voelker C."/>
            <person name="von Carlowitz I."/>
        </authorList>
    </citation>
    <scope>NUCLEOTIDE SEQUENCE [GENOMIC DNA] OF 313-411</scope>
    <source>
        <strain>K12</strain>
    </source>
</reference>
<reference key="4">
    <citation type="journal article" date="2008" name="Biochem. Biophys. Res. Commun.">
        <title>The iscS gene deficiency affects the expression of pyrimidine metabolism genes.</title>
        <authorList>
            <person name="Mihara H."/>
            <person name="Hidese R."/>
            <person name="Yamane M."/>
            <person name="Kurihara T."/>
            <person name="Esaki N."/>
        </authorList>
    </citation>
    <scope>PROTEIN SEQUENCE OF 1-15</scope>
    <scope>FUNCTION IN PYRIMIDINE METABOLISM</scope>
    <scope>INDUCTION</scope>
    <scope>IRON-SULFUR</scope>
    <scope>NAD</scope>
</reference>
<reference key="5">
    <citation type="journal article" date="2011" name="J. Bacteriol.">
        <title>Escherichia coli dihydropyrimidine dehydrogenase is a novel NAD-dependent heterotetramer essential for the production of 5,6-dihydrouracil.</title>
        <authorList>
            <person name="Hidese R."/>
            <person name="Mihara H."/>
            <person name="Kurihara T."/>
            <person name="Esaki N."/>
        </authorList>
    </citation>
    <scope>FUNCTION AS A DIHYDROPYRIMIDINE DEHYDROGENASE</scope>
    <scope>CATALYTIC ACTIVITY</scope>
    <scope>BIOPHYSICOCHEMICAL PROPERTIES</scope>
    <scope>SUBUNIT</scope>
    <source>
        <strain>K12 / W3110 / ATCC 27325 / DSM 5911</strain>
    </source>
</reference>
<sequence>MLTKDLSITFCGVKFPNPFCLSSSPVGNCYEMCAKAYDTGWGGVVFKTIGFFIANEVSPRFDHLVKEDTGFIGFKNMEQIAEHPLEENLAALRRLKEDYPDKVLIASIMGENEQQWEELARLVQEAGADMIECNFSCPQMTSHAMGSDVGQSPELVEKYCRAVKRGSTLPMLAKMTPNIGDMCEVALAAKRGGADGIAAINTVKSITNIDLNQKIGMPIVNGKSSISGYSGKAVKPIALRFIQQMRTHPELRDFPISGIGGIETWEDAAEFLLLGAATLQVTTGIMQYGYRIVEDMASGLSHYLADQGFDSLQEMVGLANNNIVPAEDLDRSYIVYPRINLDKCVGCGRCYISCYDGGHQAMEWSEKTRTPHCNTEKCVGCLLCGHVCPVGCIELGEVKFKKGEKEHPVTL</sequence>
<name>PREA_ECOLI</name>
<organism>
    <name type="scientific">Escherichia coli (strain K12)</name>
    <dbReference type="NCBI Taxonomy" id="83333"/>
    <lineage>
        <taxon>Bacteria</taxon>
        <taxon>Pseudomonadati</taxon>
        <taxon>Pseudomonadota</taxon>
        <taxon>Gammaproteobacteria</taxon>
        <taxon>Enterobacterales</taxon>
        <taxon>Enterobacteriaceae</taxon>
        <taxon>Escherichia</taxon>
    </lineage>
</organism>
<proteinExistence type="evidence at protein level"/>
<comment type="function">
    <text evidence="4 5">Involved in pyrimidine base degradation. Catalyzes physiologically the reduction of uracil to 5,6-dihydrouracil (DHU) by using NADH as a specific cosubstrate. It also catalyzes the reverse reaction and the reduction of thymine to 5,6-dihydrothymine (DHT).</text>
</comment>
<comment type="catalytic activity">
    <reaction evidence="5">
        <text>5,6-dihydrouracil + NAD(+) = uracil + NADH + H(+)</text>
        <dbReference type="Rhea" id="RHEA:20189"/>
        <dbReference type="ChEBI" id="CHEBI:15378"/>
        <dbReference type="ChEBI" id="CHEBI:15901"/>
        <dbReference type="ChEBI" id="CHEBI:17568"/>
        <dbReference type="ChEBI" id="CHEBI:57540"/>
        <dbReference type="ChEBI" id="CHEBI:57945"/>
        <dbReference type="EC" id="1.3.1.1"/>
    </reaction>
</comment>
<comment type="catalytic activity">
    <reaction evidence="5">
        <text>5,6-dihydrothymine + NAD(+) = thymine + NADH + H(+)</text>
        <dbReference type="Rhea" id="RHEA:28791"/>
        <dbReference type="ChEBI" id="CHEBI:15378"/>
        <dbReference type="ChEBI" id="CHEBI:17821"/>
        <dbReference type="ChEBI" id="CHEBI:27468"/>
        <dbReference type="ChEBI" id="CHEBI:57540"/>
        <dbReference type="ChEBI" id="CHEBI:57945"/>
        <dbReference type="EC" id="1.3.1.1"/>
    </reaction>
</comment>
<comment type="cofactor">
    <cofactor evidence="6">
        <name>[4Fe-4S] cluster</name>
        <dbReference type="ChEBI" id="CHEBI:49883"/>
    </cofactor>
    <text evidence="6">Binds 2 [4Fe-4S] clusters.</text>
</comment>
<comment type="biophysicochemical properties">
    <kinetics>
        <KM evidence="5">38 uM for uracil (at pH 6 and 30 degrees Celsius)</KM>
        <KM evidence="5">87 uM for thymidine (at pH 6 and 30 degrees Celsius)</KM>
        <KM evidence="5">130 uM for DHT (at pH 11 and 30 degrees Celsius)</KM>
        <KM evidence="5">160 uM for DHU (at pH 11 and 30 degrees Celsius)</KM>
        <Vmax evidence="5">0.18 umol/min/mg enzyme toward DHT (at pH 11 and 30 degrees Celsius)</Vmax>
        <Vmax evidence="5">0.26 umol/min/mg enzyme toward thymidine (at pH 6 and 30 degrees Celsius)</Vmax>
        <Vmax evidence="5">0.43 umol/min/mg enzyme toward uracil (at pH 6 and 30 degrees Celsius)</Vmax>
        <Vmax evidence="5">0.44 umol/min/mg enzyme toward DHU (at pH 11 and 30 degrees Celsius)</Vmax>
        <Vmax evidence="5">0.67 umol/min/mg enzyme toward fluorouracil (at pH 6 and 30 degrees Celsius)</Vmax>
    </kinetics>
</comment>
<comment type="subunit">
    <text evidence="5">Heterotetramer of 2 PreA and 2 PreT subunits.</text>
</comment>
<comment type="induction">
    <text evidence="4">Transcriptionally regulated by IscS.</text>
</comment>
<comment type="similarity">
    <text evidence="6">Belongs to the dihydropyrimidine dehydrogenase family.</text>
</comment>
<protein>
    <recommendedName>
        <fullName>NAD-dependent dihydropyrimidine dehydrogenase subunit PreA</fullName>
        <shortName>DPD</shortName>
        <ecNumber>1.3.1.1</ecNumber>
    </recommendedName>
    <alternativeName>
        <fullName>Dihydrothymine dehydrogenase</fullName>
    </alternativeName>
    <alternativeName>
        <fullName>Dihydrouracil dehydrogenase</fullName>
    </alternativeName>
</protein>
<evidence type="ECO:0000250" key="1"/>
<evidence type="ECO:0000255" key="2"/>
<evidence type="ECO:0000255" key="3">
    <source>
        <dbReference type="PROSITE-ProRule" id="PRU00711"/>
    </source>
</evidence>
<evidence type="ECO:0000269" key="4">
    <source>
    </source>
</evidence>
<evidence type="ECO:0000269" key="5">
    <source>
    </source>
</evidence>
<evidence type="ECO:0000305" key="6"/>
<dbReference type="EC" id="1.3.1.1"/>
<dbReference type="EMBL" id="U00096">
    <property type="protein sequence ID" value="AAC75208.2"/>
    <property type="molecule type" value="Genomic_DNA"/>
</dbReference>
<dbReference type="EMBL" id="AP009048">
    <property type="protein sequence ID" value="BAE76624.1"/>
    <property type="molecule type" value="Genomic_DNA"/>
</dbReference>
<dbReference type="EMBL" id="M59444">
    <property type="status" value="NOT_ANNOTATED_CDS"/>
    <property type="molecule type" value="Genomic_DNA"/>
</dbReference>
<dbReference type="RefSeq" id="NP_416652.4">
    <property type="nucleotide sequence ID" value="NC_000913.3"/>
</dbReference>
<dbReference type="RefSeq" id="WP_000956071.1">
    <property type="nucleotide sequence ID" value="NZ_SSZK01000011.1"/>
</dbReference>
<dbReference type="SMR" id="P25889"/>
<dbReference type="BioGRID" id="4259170">
    <property type="interactions" value="34"/>
</dbReference>
<dbReference type="BioGRID" id="853281">
    <property type="interactions" value="1"/>
</dbReference>
<dbReference type="ComplexPortal" id="CPX-5561">
    <property type="entry name" value="NAD-dependent dihydropyrimidine dehydrogenase complex"/>
</dbReference>
<dbReference type="DIP" id="DIP-11915N"/>
<dbReference type="FunCoup" id="P25889">
    <property type="interactions" value="423"/>
</dbReference>
<dbReference type="IntAct" id="P25889">
    <property type="interactions" value="2"/>
</dbReference>
<dbReference type="STRING" id="511145.b2147"/>
<dbReference type="jPOST" id="P25889"/>
<dbReference type="PaxDb" id="511145-b2147"/>
<dbReference type="EnsemblBacteria" id="AAC75208">
    <property type="protein sequence ID" value="AAC75208"/>
    <property type="gene ID" value="b2147"/>
</dbReference>
<dbReference type="GeneID" id="93775035"/>
<dbReference type="GeneID" id="949037"/>
<dbReference type="KEGG" id="ecj:JW2134"/>
<dbReference type="KEGG" id="eco:b2147"/>
<dbReference type="KEGG" id="ecoc:C3026_12030"/>
<dbReference type="PATRIC" id="fig|1411691.4.peg.95"/>
<dbReference type="EchoBASE" id="EB1266"/>
<dbReference type="eggNOG" id="COG0167">
    <property type="taxonomic scope" value="Bacteria"/>
</dbReference>
<dbReference type="eggNOG" id="COG1146">
    <property type="taxonomic scope" value="Bacteria"/>
</dbReference>
<dbReference type="HOGENOM" id="CLU_042042_4_2_6"/>
<dbReference type="InParanoid" id="P25889"/>
<dbReference type="OMA" id="FRIVEDM"/>
<dbReference type="OrthoDB" id="9794954at2"/>
<dbReference type="PhylomeDB" id="P25889"/>
<dbReference type="BioCyc" id="EcoCyc:EG11289-MONOMER"/>
<dbReference type="BioCyc" id="MetaCyc:EG11289-MONOMER"/>
<dbReference type="SABIO-RK" id="P25889"/>
<dbReference type="PRO" id="PR:P25889"/>
<dbReference type="Proteomes" id="UP000000625">
    <property type="component" value="Chromosome"/>
</dbReference>
<dbReference type="GO" id="GO:0005737">
    <property type="term" value="C:cytoplasm"/>
    <property type="evidence" value="ECO:0007669"/>
    <property type="project" value="InterPro"/>
</dbReference>
<dbReference type="GO" id="GO:0140690">
    <property type="term" value="C:dihydropyrimidine dehydrogenase (NAD+) complex"/>
    <property type="evidence" value="ECO:0000314"/>
    <property type="project" value="EcoCyc"/>
</dbReference>
<dbReference type="GO" id="GO:1990204">
    <property type="term" value="C:oxidoreductase complex"/>
    <property type="evidence" value="ECO:0000314"/>
    <property type="project" value="ComplexPortal"/>
</dbReference>
<dbReference type="GO" id="GO:0051539">
    <property type="term" value="F:4 iron, 4 sulfur cluster binding"/>
    <property type="evidence" value="ECO:0007669"/>
    <property type="project" value="UniProtKB-KW"/>
</dbReference>
<dbReference type="GO" id="GO:0004159">
    <property type="term" value="F:dihydropyrimidine dehydrogenase (NAD+) activity"/>
    <property type="evidence" value="ECO:0007669"/>
    <property type="project" value="UniProtKB-EC"/>
</dbReference>
<dbReference type="GO" id="GO:0051536">
    <property type="term" value="F:iron-sulfur cluster binding"/>
    <property type="evidence" value="ECO:0000314"/>
    <property type="project" value="EcoCyc"/>
</dbReference>
<dbReference type="GO" id="GO:0046872">
    <property type="term" value="F:metal ion binding"/>
    <property type="evidence" value="ECO:0007669"/>
    <property type="project" value="UniProtKB-KW"/>
</dbReference>
<dbReference type="GO" id="GO:0003954">
    <property type="term" value="F:NADH dehydrogenase activity"/>
    <property type="evidence" value="ECO:0000314"/>
    <property type="project" value="UniProtKB"/>
</dbReference>
<dbReference type="GO" id="GO:0071978">
    <property type="term" value="P:bacterial-type flagellum-dependent swarming motility"/>
    <property type="evidence" value="ECO:0000315"/>
    <property type="project" value="EcoCyc"/>
</dbReference>
<dbReference type="GO" id="GO:0006208">
    <property type="term" value="P:pyrimidine nucleobase catabolic process"/>
    <property type="evidence" value="ECO:0000314"/>
    <property type="project" value="UniProtKB"/>
</dbReference>
<dbReference type="GO" id="GO:0006210">
    <property type="term" value="P:thymine catabolic process"/>
    <property type="evidence" value="ECO:0000314"/>
    <property type="project" value="ComplexPortal"/>
</dbReference>
<dbReference type="GO" id="GO:0006212">
    <property type="term" value="P:uracil catabolic process"/>
    <property type="evidence" value="ECO:0000314"/>
    <property type="project" value="ComplexPortal"/>
</dbReference>
<dbReference type="CDD" id="cd02940">
    <property type="entry name" value="DHPD_FMN"/>
    <property type="match status" value="1"/>
</dbReference>
<dbReference type="FunFam" id="3.20.20.70:FF:000027">
    <property type="entry name" value="Dihydropyrimidine dehydrogenase [NADP(+)]"/>
    <property type="match status" value="1"/>
</dbReference>
<dbReference type="FunFam" id="3.30.70.20:FF:000031">
    <property type="entry name" value="Dihydropyrimidine dehydrogenase subunit B"/>
    <property type="match status" value="1"/>
</dbReference>
<dbReference type="Gene3D" id="3.30.70.20">
    <property type="match status" value="1"/>
</dbReference>
<dbReference type="Gene3D" id="3.20.20.70">
    <property type="entry name" value="Aldolase class I"/>
    <property type="match status" value="1"/>
</dbReference>
<dbReference type="InterPro" id="IPR017896">
    <property type="entry name" value="4Fe4S_Fe-S-bd"/>
</dbReference>
<dbReference type="InterPro" id="IPR017900">
    <property type="entry name" value="4Fe4S_Fe_S_CS"/>
</dbReference>
<dbReference type="InterPro" id="IPR013785">
    <property type="entry name" value="Aldolase_TIM"/>
</dbReference>
<dbReference type="InterPro" id="IPR005720">
    <property type="entry name" value="Dihydroorotate_DH_cat"/>
</dbReference>
<dbReference type="NCBIfam" id="NF006183">
    <property type="entry name" value="PRK08318.1"/>
    <property type="match status" value="1"/>
</dbReference>
<dbReference type="PANTHER" id="PTHR43073">
    <property type="entry name" value="DIHYDROPYRIMIDINE DEHYDROGENASE [NADP(+)]"/>
    <property type="match status" value="1"/>
</dbReference>
<dbReference type="PANTHER" id="PTHR43073:SF2">
    <property type="entry name" value="DIHYDROPYRIMIDINE DEHYDROGENASE [NADP(+)]"/>
    <property type="match status" value="1"/>
</dbReference>
<dbReference type="Pfam" id="PF01180">
    <property type="entry name" value="DHO_dh"/>
    <property type="match status" value="1"/>
</dbReference>
<dbReference type="Pfam" id="PF14697">
    <property type="entry name" value="Fer4_21"/>
    <property type="match status" value="1"/>
</dbReference>
<dbReference type="SUPFAM" id="SSF54862">
    <property type="entry name" value="4Fe-4S ferredoxins"/>
    <property type="match status" value="1"/>
</dbReference>
<dbReference type="SUPFAM" id="SSF51395">
    <property type="entry name" value="FMN-linked oxidoreductases"/>
    <property type="match status" value="1"/>
</dbReference>
<dbReference type="PROSITE" id="PS00198">
    <property type="entry name" value="4FE4S_FER_1"/>
    <property type="match status" value="1"/>
</dbReference>
<dbReference type="PROSITE" id="PS51379">
    <property type="entry name" value="4FE4S_FER_2"/>
    <property type="match status" value="2"/>
</dbReference>
<feature type="chain" id="PRO_0000169148" description="NAD-dependent dihydropyrimidine dehydrogenase subunit PreA">
    <location>
        <begin position="1"/>
        <end position="411"/>
    </location>
</feature>
<feature type="domain" description="4Fe-4S ferredoxin-type 1" evidence="3">
    <location>
        <begin position="335"/>
        <end position="367"/>
    </location>
</feature>
<feature type="domain" description="4Fe-4S ferredoxin-type 2" evidence="3">
    <location>
        <begin position="369"/>
        <end position="398"/>
    </location>
</feature>
<feature type="active site" description="Nucleophile" evidence="1">
    <location>
        <position position="137"/>
    </location>
</feature>
<feature type="binding site" evidence="1">
    <location>
        <position position="76"/>
    </location>
    <ligand>
        <name>substrate</name>
    </ligand>
</feature>
<feature type="binding site" evidence="1">
    <location>
        <begin position="134"/>
        <end position="136"/>
    </location>
    <ligand>
        <name>substrate</name>
    </ligand>
</feature>
<feature type="binding site" evidence="1">
    <location>
        <begin position="201"/>
        <end position="202"/>
    </location>
    <ligand>
        <name>substrate</name>
    </ligand>
</feature>
<feature type="binding site" evidence="2">
    <location>
        <position position="344"/>
    </location>
    <ligand>
        <name>[4Fe-4S] cluster</name>
        <dbReference type="ChEBI" id="CHEBI:49883"/>
        <label>1</label>
    </ligand>
</feature>
<feature type="binding site" evidence="2">
    <location>
        <position position="347"/>
    </location>
    <ligand>
        <name>[4Fe-4S] cluster</name>
        <dbReference type="ChEBI" id="CHEBI:49883"/>
        <label>1</label>
    </ligand>
</feature>
<feature type="binding site" evidence="2">
    <location>
        <position position="350"/>
    </location>
    <ligand>
        <name>[4Fe-4S] cluster</name>
        <dbReference type="ChEBI" id="CHEBI:49883"/>
        <label>1</label>
    </ligand>
</feature>
<feature type="binding site" evidence="2">
    <location>
        <position position="354"/>
    </location>
    <ligand>
        <name>[4Fe-4S] cluster</name>
        <dbReference type="ChEBI" id="CHEBI:49883"/>
        <label>2</label>
    </ligand>
</feature>
<feature type="binding site" evidence="2">
    <location>
        <position position="378"/>
    </location>
    <ligand>
        <name>[4Fe-4S] cluster</name>
        <dbReference type="ChEBI" id="CHEBI:49883"/>
        <label>2</label>
    </ligand>
</feature>
<feature type="binding site" evidence="2">
    <location>
        <position position="381"/>
    </location>
    <ligand>
        <name>[4Fe-4S] cluster</name>
        <dbReference type="ChEBI" id="CHEBI:49883"/>
        <label>2</label>
    </ligand>
</feature>
<feature type="binding site" evidence="2">
    <location>
        <position position="384"/>
    </location>
    <ligand>
        <name>[4Fe-4S] cluster</name>
        <dbReference type="ChEBI" id="CHEBI:49883"/>
        <label>2</label>
    </ligand>
</feature>
<feature type="binding site" evidence="2">
    <location>
        <position position="388"/>
    </location>
    <ligand>
        <name>[4Fe-4S] cluster</name>
        <dbReference type="ChEBI" id="CHEBI:49883"/>
        <label>1</label>
    </ligand>
</feature>
<feature type="sequence conflict" description="In Ref. 3; M59444." evidence="6" ref="3">
    <original>PVGCIELGEVKFKKGEKEHPVTL</original>
    <variation>RWVVLSSGK</variation>
    <location>
        <begin position="389"/>
        <end position="411"/>
    </location>
</feature>